<reference key="1">
    <citation type="journal article" date="1994" name="Science">
        <title>Complete nucleotide sequence of Saccharomyces cerevisiae chromosome VIII.</title>
        <authorList>
            <person name="Johnston M."/>
            <person name="Andrews S."/>
            <person name="Brinkman R."/>
            <person name="Cooper J."/>
            <person name="Ding H."/>
            <person name="Dover J."/>
            <person name="Du Z."/>
            <person name="Favello A."/>
            <person name="Fulton L."/>
            <person name="Gattung S."/>
            <person name="Geisel C."/>
            <person name="Kirsten J."/>
            <person name="Kucaba T."/>
            <person name="Hillier L.W."/>
            <person name="Jier M."/>
            <person name="Johnston L."/>
            <person name="Langston Y."/>
            <person name="Latreille P."/>
            <person name="Louis E.J."/>
            <person name="Macri C."/>
            <person name="Mardis E."/>
            <person name="Menezes S."/>
            <person name="Mouser L."/>
            <person name="Nhan M."/>
            <person name="Rifkin L."/>
            <person name="Riles L."/>
            <person name="St Peter H."/>
            <person name="Trevaskis E."/>
            <person name="Vaughan K."/>
            <person name="Vignati D."/>
            <person name="Wilcox L."/>
            <person name="Wohldman P."/>
            <person name="Waterston R."/>
            <person name="Wilson R."/>
            <person name="Vaudin M."/>
        </authorList>
    </citation>
    <scope>NUCLEOTIDE SEQUENCE [LARGE SCALE GENOMIC DNA]</scope>
    <source>
        <strain>ATCC 204508 / S288c</strain>
    </source>
</reference>
<reference key="2">
    <citation type="journal article" date="2014" name="G3 (Bethesda)">
        <title>The reference genome sequence of Saccharomyces cerevisiae: Then and now.</title>
        <authorList>
            <person name="Engel S.R."/>
            <person name="Dietrich F.S."/>
            <person name="Fisk D.G."/>
            <person name="Binkley G."/>
            <person name="Balakrishnan R."/>
            <person name="Costanzo M.C."/>
            <person name="Dwight S.S."/>
            <person name="Hitz B.C."/>
            <person name="Karra K."/>
            <person name="Nash R.S."/>
            <person name="Weng S."/>
            <person name="Wong E.D."/>
            <person name="Lloyd P."/>
            <person name="Skrzypek M.S."/>
            <person name="Miyasato S.R."/>
            <person name="Simison M."/>
            <person name="Cherry J.M."/>
        </authorList>
    </citation>
    <scope>GENOME REANNOTATION</scope>
    <source>
        <strain>ATCC 204508 / S288c</strain>
    </source>
</reference>
<reference key="3">
    <citation type="journal article" date="2003" name="Nature">
        <title>Global analysis of protein localization in budding yeast.</title>
        <authorList>
            <person name="Huh W.-K."/>
            <person name="Falvo J.V."/>
            <person name="Gerke L.C."/>
            <person name="Carroll A.S."/>
            <person name="Howson R.W."/>
            <person name="Weissman J.S."/>
            <person name="O'Shea E.K."/>
        </authorList>
    </citation>
    <scope>SUBCELLULAR LOCATION [LARGE SCALE ANALYSIS]</scope>
</reference>
<reference key="4">
    <citation type="journal article" date="2003" name="Nature">
        <title>Global analysis of protein expression in yeast.</title>
        <authorList>
            <person name="Ghaemmaghami S."/>
            <person name="Huh W.-K."/>
            <person name="Bower K."/>
            <person name="Howson R.W."/>
            <person name="Belle A."/>
            <person name="Dephoure N."/>
            <person name="O'Shea E.K."/>
            <person name="Weissman J.S."/>
        </authorList>
    </citation>
    <scope>LEVEL OF PROTEIN EXPRESSION [LARGE SCALE ANALYSIS]</scope>
</reference>
<reference key="5">
    <citation type="journal article" date="2005" name="Cell">
        <title>Navigating the chaperone network: an integrative map of physical and genetic interactions mediated by the hsp90 chaperone.</title>
        <authorList>
            <person name="Zhao R."/>
            <person name="Davey M.G."/>
            <person name="Hsu Y.-C."/>
            <person name="Kaplanek P."/>
            <person name="Tong A."/>
            <person name="Parsons A.B."/>
            <person name="Krogan N.J."/>
            <person name="Cagney G."/>
            <person name="Mai D."/>
            <person name="Greenblatt J.F."/>
            <person name="Boone C."/>
            <person name="Emili A."/>
            <person name="Houry W.A."/>
        </authorList>
    </citation>
    <scope>INTERACTION WITH HSP90</scope>
    <scope>IDENTIFICATION IN THE R2PT COMPLEX</scope>
    <scope>IDENTIFICATION BY MASS SPECTROMETRY</scope>
</reference>
<reference key="6">
    <citation type="journal article" date="2005" name="FEBS J.">
        <title>Nop53p, an essential nucleolar protein that interacts with Nop17p and Nip7p, is required for pre-rRNA processing in Saccharomyces cerevisiae.</title>
        <authorList>
            <person name="Granato D.C."/>
            <person name="Gonzales F.A."/>
            <person name="Luz J.S."/>
            <person name="Cassiola F."/>
            <person name="Machado-Santelli G.M."/>
            <person name="Oliveira C.C."/>
        </authorList>
    </citation>
    <scope>INTERACTION WITH NOP53</scope>
</reference>
<reference key="7">
    <citation type="journal article" date="2005" name="J. Mol. Biol.">
        <title>Characterization of Saccharomyces cerevisiae Nop17p, a novel Nop58p-interacting protein that is involved in pre-rRNA processing.</title>
        <authorList>
            <person name="Gonzales F.A."/>
            <person name="Zanchin N.I."/>
            <person name="Luz J.S."/>
            <person name="Oliveira C.C."/>
        </authorList>
    </citation>
    <scope>FUNCTION</scope>
    <scope>SUBCELLULAR LOCATION</scope>
    <scope>INTERACTION WITH RRP43 AND NOP58</scope>
</reference>
<evidence type="ECO:0000256" key="1">
    <source>
        <dbReference type="SAM" id="MobiDB-lite"/>
    </source>
</evidence>
<evidence type="ECO:0000269" key="2">
    <source>
    </source>
</evidence>
<evidence type="ECO:0000269" key="3">
    <source>
    </source>
</evidence>
<evidence type="ECO:0000269" key="4">
    <source>
    </source>
</evidence>
<evidence type="ECO:0000269" key="5">
    <source>
    </source>
</evidence>
<evidence type="ECO:0000305" key="6"/>
<evidence type="ECO:0007829" key="7">
    <source>
        <dbReference type="PDB" id="2MNJ"/>
    </source>
</evidence>
<evidence type="ECO:0007829" key="8">
    <source>
        <dbReference type="PDB" id="4CGU"/>
    </source>
</evidence>
<evidence type="ECO:0007829" key="9">
    <source>
        <dbReference type="PDB" id="4CHH"/>
    </source>
</evidence>
<organism>
    <name type="scientific">Saccharomyces cerevisiae (strain ATCC 204508 / S288c)</name>
    <name type="common">Baker's yeast</name>
    <dbReference type="NCBI Taxonomy" id="559292"/>
    <lineage>
        <taxon>Eukaryota</taxon>
        <taxon>Fungi</taxon>
        <taxon>Dikarya</taxon>
        <taxon>Ascomycota</taxon>
        <taxon>Saccharomycotina</taxon>
        <taxon>Saccharomycetes</taxon>
        <taxon>Saccharomycetales</taxon>
        <taxon>Saccharomycetaceae</taxon>
        <taxon>Saccharomyces</taxon>
    </lineage>
</organism>
<accession>P38768</accession>
<accession>D3DKY1</accession>
<gene>
    <name type="primary">PIH1</name>
    <name type="synonym">NOP17</name>
    <name type="ordered locus">YHR034C</name>
</gene>
<dbReference type="EMBL" id="U00062">
    <property type="protein sequence ID" value="AAB68914.1"/>
    <property type="molecule type" value="Genomic_DNA"/>
</dbReference>
<dbReference type="EMBL" id="BK006934">
    <property type="protein sequence ID" value="DAA06725.1"/>
    <property type="molecule type" value="Genomic_DNA"/>
</dbReference>
<dbReference type="PIR" id="S46745">
    <property type="entry name" value="S46745"/>
</dbReference>
<dbReference type="RefSeq" id="NP_011899.1">
    <property type="nucleotide sequence ID" value="NM_001179164.1"/>
</dbReference>
<dbReference type="PDB" id="2MNJ">
    <property type="method" value="NMR"/>
    <property type="chains" value="B=257-344"/>
</dbReference>
<dbReference type="PDB" id="4CGU">
    <property type="method" value="X-ray"/>
    <property type="resolution" value="2.11 A"/>
    <property type="chains" value="B=187-344"/>
</dbReference>
<dbReference type="PDB" id="4CHH">
    <property type="method" value="X-ray"/>
    <property type="resolution" value="2.03 A"/>
    <property type="chains" value="A/B=1-185"/>
</dbReference>
<dbReference type="PDBsum" id="2MNJ"/>
<dbReference type="PDBsum" id="4CGU"/>
<dbReference type="PDBsum" id="4CHH"/>
<dbReference type="BMRB" id="P38768"/>
<dbReference type="SMR" id="P38768"/>
<dbReference type="BioGRID" id="36465">
    <property type="interactions" value="270"/>
</dbReference>
<dbReference type="ComplexPortal" id="CPX-1814">
    <property type="entry name" value="R2TP co-chaperone complex"/>
</dbReference>
<dbReference type="DIP" id="DIP-807N"/>
<dbReference type="FunCoup" id="P38768">
    <property type="interactions" value="103"/>
</dbReference>
<dbReference type="IntAct" id="P38768">
    <property type="interactions" value="21"/>
</dbReference>
<dbReference type="MINT" id="P38768"/>
<dbReference type="STRING" id="4932.YHR034C"/>
<dbReference type="iPTMnet" id="P38768"/>
<dbReference type="PaxDb" id="4932-YHR034C"/>
<dbReference type="PeptideAtlas" id="P38768"/>
<dbReference type="EnsemblFungi" id="YHR034C_mRNA">
    <property type="protein sequence ID" value="YHR034C"/>
    <property type="gene ID" value="YHR034C"/>
</dbReference>
<dbReference type="GeneID" id="856429"/>
<dbReference type="KEGG" id="sce:YHR034C"/>
<dbReference type="AGR" id="SGD:S000001076"/>
<dbReference type="SGD" id="S000001076">
    <property type="gene designation" value="PIH1"/>
</dbReference>
<dbReference type="VEuPathDB" id="FungiDB:YHR034C"/>
<dbReference type="eggNOG" id="KOG4356">
    <property type="taxonomic scope" value="Eukaryota"/>
</dbReference>
<dbReference type="HOGENOM" id="CLU_072113_0_0_1"/>
<dbReference type="InParanoid" id="P38768"/>
<dbReference type="OMA" id="EWCLESC"/>
<dbReference type="OrthoDB" id="5135119at2759"/>
<dbReference type="BioCyc" id="YEAST:G3O-31094-MONOMER"/>
<dbReference type="BioGRID-ORCS" id="856429">
    <property type="hits" value="0 hits in 10 CRISPR screens"/>
</dbReference>
<dbReference type="EvolutionaryTrace" id="P38768"/>
<dbReference type="PRO" id="PR:P38768"/>
<dbReference type="Proteomes" id="UP000002311">
    <property type="component" value="Chromosome VIII"/>
</dbReference>
<dbReference type="RNAct" id="P38768">
    <property type="molecule type" value="protein"/>
</dbReference>
<dbReference type="GO" id="GO:0005737">
    <property type="term" value="C:cytoplasm"/>
    <property type="evidence" value="ECO:0007005"/>
    <property type="project" value="SGD"/>
</dbReference>
<dbReference type="GO" id="GO:0005634">
    <property type="term" value="C:nucleus"/>
    <property type="evidence" value="ECO:0007005"/>
    <property type="project" value="SGD"/>
</dbReference>
<dbReference type="GO" id="GO:0097255">
    <property type="term" value="C:R2TP complex"/>
    <property type="evidence" value="ECO:0000314"/>
    <property type="project" value="SGD"/>
</dbReference>
<dbReference type="GO" id="GO:1990904">
    <property type="term" value="C:ribonucleoprotein complex"/>
    <property type="evidence" value="ECO:0000318"/>
    <property type="project" value="GO_Central"/>
</dbReference>
<dbReference type="GO" id="GO:0000492">
    <property type="term" value="P:box C/D snoRNP assembly"/>
    <property type="evidence" value="ECO:0000315"/>
    <property type="project" value="SGD"/>
</dbReference>
<dbReference type="GO" id="GO:0006397">
    <property type="term" value="P:mRNA processing"/>
    <property type="evidence" value="ECO:0007669"/>
    <property type="project" value="UniProtKB-KW"/>
</dbReference>
<dbReference type="GO" id="GO:0006457">
    <property type="term" value="P:protein folding"/>
    <property type="evidence" value="ECO:0000315"/>
    <property type="project" value="SGD"/>
</dbReference>
<dbReference type="GO" id="GO:0050821">
    <property type="term" value="P:protein stabilization"/>
    <property type="evidence" value="ECO:0000303"/>
    <property type="project" value="ComplexPortal"/>
</dbReference>
<dbReference type="GO" id="GO:0008361">
    <property type="term" value="P:regulation of cell size"/>
    <property type="evidence" value="ECO:0007001"/>
    <property type="project" value="SGD"/>
</dbReference>
<dbReference type="GO" id="GO:0008380">
    <property type="term" value="P:RNA splicing"/>
    <property type="evidence" value="ECO:0007669"/>
    <property type="project" value="UniProtKB-KW"/>
</dbReference>
<dbReference type="GO" id="GO:0006364">
    <property type="term" value="P:rRNA processing"/>
    <property type="evidence" value="ECO:0000315"/>
    <property type="project" value="SGD"/>
</dbReference>
<dbReference type="Gene3D" id="2.60.40.4160">
    <property type="match status" value="1"/>
</dbReference>
<dbReference type="IDEAL" id="IID50209"/>
<dbReference type="InterPro" id="IPR050734">
    <property type="entry name" value="PIH1/Kintoun_subfamily"/>
</dbReference>
<dbReference type="InterPro" id="IPR041441">
    <property type="entry name" value="Pih1_CS_Ascomycota"/>
</dbReference>
<dbReference type="InterPro" id="IPR012981">
    <property type="entry name" value="PIH1_N"/>
</dbReference>
<dbReference type="PANTHER" id="PTHR22997">
    <property type="entry name" value="PIH1 DOMAIN-CONTAINING PROTEIN 1"/>
    <property type="match status" value="1"/>
</dbReference>
<dbReference type="PANTHER" id="PTHR22997:SF0">
    <property type="entry name" value="PIH1 DOMAIN-CONTAINING PROTEIN 1"/>
    <property type="match status" value="1"/>
</dbReference>
<dbReference type="Pfam" id="PF08190">
    <property type="entry name" value="PIH1"/>
    <property type="match status" value="1"/>
</dbReference>
<dbReference type="Pfam" id="PF18482">
    <property type="entry name" value="Pih1_fungal_CS"/>
    <property type="match status" value="1"/>
</dbReference>
<protein>
    <recommendedName>
        <fullName>Protein interacting with Hsp90 1</fullName>
    </recommendedName>
    <alternativeName>
        <fullName>Nucleolar protein 17</fullName>
    </alternativeName>
</protein>
<comment type="function">
    <text evidence="3">Involved in pre-rRNA processing and required for the NOP58-snoRNA interaction.</text>
</comment>
<comment type="subunit">
    <text evidence="3 4 5">Component of the R2TP complex composed at least of RVB1, RVB2, TAH1 and PIH1. Also interacts with HSP90, RRP43, NOP53 and NOP58.</text>
</comment>
<comment type="interaction">
    <interactant intactId="EBI-24499">
        <id>P38768</id>
    </interactant>
    <interactant intactId="EBI-8659">
        <id>P02829</id>
        <label>HSP82</label>
    </interactant>
    <organismsDiffer>false</organismsDiffer>
    <experiments>4</experiments>
</comment>
<comment type="interaction">
    <interactant intactId="EBI-24499">
        <id>P38768</id>
    </interactant>
    <interactant intactId="EBI-12126">
        <id>Q12499</id>
        <label>NOP58</label>
    </interactant>
    <organismsDiffer>false</organismsDiffer>
    <experiments>3</experiments>
</comment>
<comment type="interaction">
    <interactant intactId="EBI-24499">
        <id>P38768</id>
    </interactant>
    <interactant intactId="EBI-32462">
        <id>Q12498</id>
        <label>PRM4</label>
    </interactant>
    <organismsDiffer>false</organismsDiffer>
    <experiments>3</experiments>
</comment>
<comment type="interaction">
    <interactant intactId="EBI-24499">
        <id>P38768</id>
    </interactant>
    <interactant intactId="EBI-1773">
        <id>P25359</id>
        <label>RRP43</label>
    </interactant>
    <organismsDiffer>false</organismsDiffer>
    <experiments>2</experiments>
</comment>
<comment type="interaction">
    <interactant intactId="EBI-24499">
        <id>P38768</id>
    </interactant>
    <interactant intactId="EBI-30712">
        <id>Q03940</id>
        <label>RVB1</label>
    </interactant>
    <organismsDiffer>false</organismsDiffer>
    <experiments>11</experiments>
</comment>
<comment type="interaction">
    <interactant intactId="EBI-24499">
        <id>P38768</id>
    </interactant>
    <interactant intactId="EBI-31814">
        <id>Q12464</id>
        <label>RVB2</label>
    </interactant>
    <organismsDiffer>false</organismsDiffer>
    <experiments>8</experiments>
</comment>
<comment type="interaction">
    <interactant intactId="EBI-24499">
        <id>P38768</id>
    </interactant>
    <interactant intactId="EBI-21956">
        <id>P25638</id>
        <label>TAH1</label>
    </interactant>
    <organismsDiffer>false</organismsDiffer>
    <experiments>18</experiments>
</comment>
<comment type="subcellular location">
    <subcellularLocation>
        <location>Cytoplasm</location>
    </subcellularLocation>
    <subcellularLocation>
        <location>Nucleus</location>
    </subcellularLocation>
</comment>
<comment type="miscellaneous">
    <text evidence="2">Present with 2610 molecules/cell in log phase SD medium.</text>
</comment>
<comment type="similarity">
    <text evidence="6">Belongs to the PIH1 family.</text>
</comment>
<proteinExistence type="evidence at protein level"/>
<sequence>MADFLLRPIKQRHRNEDKYVSVDAADGSVSKIEPIADFVIKTKLLSANGPEKLQDGRKVFINVCHSPLVPKPEVDFNARIVFPLIIQNEWEIPIITSCYRMDHDKKGQECYVWDCCINSDCSRWICDDIQLREILVEWCLESCEIRDSVVLCRDRIAFPKMKKKGAELPALEVLNDELHQDYKAKMHKIIEEEAGDPMSILRGRNDDGDDNNDPDDGTLPPLFPIENKISGAKIEEIDKNEIAHRNLKQAPAPAPAPHEQQEDVPEYEVKMKRFKGAAYKLRILIENKAPNSKPDRFSPSYNFAENILYINGKLSIPLPRDIVVNAADIKIFHIRKERTLYIYI</sequence>
<keyword id="KW-0002">3D-structure</keyword>
<keyword id="KW-0963">Cytoplasm</keyword>
<keyword id="KW-0507">mRNA processing</keyword>
<keyword id="KW-0508">mRNA splicing</keyword>
<keyword id="KW-0539">Nucleus</keyword>
<keyword id="KW-1185">Reference proteome</keyword>
<name>PIH1_YEAST</name>
<feature type="chain" id="PRO_0000058440" description="Protein interacting with Hsp90 1">
    <location>
        <begin position="1"/>
        <end position="344"/>
    </location>
</feature>
<feature type="region of interest" description="Disordered" evidence="1">
    <location>
        <begin position="195"/>
        <end position="222"/>
    </location>
</feature>
<feature type="compositionally biased region" description="Acidic residues" evidence="1">
    <location>
        <begin position="207"/>
        <end position="216"/>
    </location>
</feature>
<feature type="strand" evidence="9">
    <location>
        <begin position="29"/>
        <end position="32"/>
    </location>
</feature>
<feature type="strand" evidence="9">
    <location>
        <begin position="35"/>
        <end position="47"/>
    </location>
</feature>
<feature type="strand" evidence="9">
    <location>
        <begin position="49"/>
        <end position="51"/>
    </location>
</feature>
<feature type="strand" evidence="9">
    <location>
        <begin position="58"/>
        <end position="66"/>
    </location>
</feature>
<feature type="helix" evidence="9">
    <location>
        <begin position="78"/>
        <end position="86"/>
    </location>
</feature>
<feature type="strand" evidence="9">
    <location>
        <begin position="100"/>
        <end position="103"/>
    </location>
</feature>
<feature type="strand" evidence="9">
    <location>
        <begin position="109"/>
        <end position="118"/>
    </location>
</feature>
<feature type="helix" evidence="9">
    <location>
        <begin position="119"/>
        <end position="127"/>
    </location>
</feature>
<feature type="helix" evidence="9">
    <location>
        <begin position="129"/>
        <end position="147"/>
    </location>
</feature>
<feature type="strand" evidence="9">
    <location>
        <begin position="149"/>
        <end position="151"/>
    </location>
</feature>
<feature type="strand" evidence="9">
    <location>
        <begin position="153"/>
        <end position="155"/>
    </location>
</feature>
<feature type="strand" evidence="9">
    <location>
        <begin position="160"/>
        <end position="162"/>
    </location>
</feature>
<feature type="strand" evidence="9">
    <location>
        <begin position="164"/>
        <end position="167"/>
    </location>
</feature>
<feature type="strand" evidence="9">
    <location>
        <begin position="171"/>
        <end position="174"/>
    </location>
</feature>
<feature type="helix" evidence="9">
    <location>
        <begin position="175"/>
        <end position="177"/>
    </location>
</feature>
<feature type="helix" evidence="9">
    <location>
        <begin position="180"/>
        <end position="182"/>
    </location>
</feature>
<feature type="strand" evidence="7">
    <location>
        <begin position="262"/>
        <end position="264"/>
    </location>
</feature>
<feature type="strand" evidence="8">
    <location>
        <begin position="267"/>
        <end position="273"/>
    </location>
</feature>
<feature type="strand" evidence="8">
    <location>
        <begin position="275"/>
        <end position="278"/>
    </location>
</feature>
<feature type="strand" evidence="8">
    <location>
        <begin position="280"/>
        <end position="287"/>
    </location>
</feature>
<feature type="strand" evidence="7">
    <location>
        <begin position="289"/>
        <end position="291"/>
    </location>
</feature>
<feature type="strand" evidence="8">
    <location>
        <begin position="300"/>
        <end position="302"/>
    </location>
</feature>
<feature type="turn" evidence="8">
    <location>
        <begin position="303"/>
        <end position="306"/>
    </location>
</feature>
<feature type="strand" evidence="8">
    <location>
        <begin position="307"/>
        <end position="309"/>
    </location>
</feature>
<feature type="strand" evidence="8">
    <location>
        <begin position="311"/>
        <end position="313"/>
    </location>
</feature>
<feature type="strand" evidence="8">
    <location>
        <begin position="315"/>
        <end position="317"/>
    </location>
</feature>
<feature type="turn" evidence="8">
    <location>
        <begin position="326"/>
        <end position="328"/>
    </location>
</feature>
<feature type="strand" evidence="8">
    <location>
        <begin position="330"/>
        <end position="334"/>
    </location>
</feature>
<feature type="turn" evidence="8">
    <location>
        <begin position="335"/>
        <end position="338"/>
    </location>
</feature>
<feature type="strand" evidence="8">
    <location>
        <begin position="339"/>
        <end position="344"/>
    </location>
</feature>